<evidence type="ECO:0000250" key="1">
    <source>
        <dbReference type="UniProtKB" id="Q8BLA1"/>
    </source>
</evidence>
<evidence type="ECO:0000256" key="2">
    <source>
        <dbReference type="SAM" id="MobiDB-lite"/>
    </source>
</evidence>
<evidence type="ECO:0000269" key="3">
    <source>
    </source>
</evidence>
<evidence type="ECO:0000269" key="4">
    <source>
    </source>
</evidence>
<evidence type="ECO:0000269" key="5">
    <source>
    </source>
</evidence>
<evidence type="ECO:0000303" key="6">
    <source>
    </source>
</evidence>
<evidence type="ECO:0000303" key="7">
    <source>
    </source>
</evidence>
<evidence type="ECO:0000305" key="8"/>
<evidence type="ECO:0000312" key="9">
    <source>
        <dbReference type="EMBL" id="BAA77624.1"/>
    </source>
</evidence>
<sequence length="1755" mass="195684">METRSSKTRRSLASRTNECQGTMWAPTSPPAGSSSPSQPTWKSSLYSSLAYSEAFHYSFAARPRRLTQLALAQRPEPQLLRLRPSSLRTQDISHLLTGVFRNLYSAEVIGDEVSASLIKARGSENERHEEFVDQLQQIRELYKQRLDEFEMLERHITQAQARAIAENERVMSQAGVQDLESLVRLPPVKSVSRWCIDSELLRKHHLISPEDYYTDTVPFHSAPKGISLPGCSKLTFSCEKRSVQKKELNKKLEDSCRKKLAEFEDELDHTVDSLTWNLTPKAKERTREPLKKASQPRNKNWMNHLRVPQRELDRLLLARMESRNHFLKNPRFFPPNTRYGGKSLVFPPKKPAPIGEFQSTEPEQSCADTPVFLAKPPIGFFTDYEIGPVYEMVIALQNTTTTSRYLRVLPPSTPYFALGLGMFPGKGGMVAPGMTCQYIVQFFPDCLGDFDDFILVETQSAHTLLIPLQARRPPPVLTLSPVLDCGYCLIGGVKMTRFICKNVGFSVGRFCIMPKTSWPPLSFKAIATVGFVEQPPFGILPSVFELAPGHAILVEVLFSPKSLGKAEQTFIIMCDNCQIKELVTIGIGQLIALDLIYISGEKSQPDPGELTDLTAQHFIRFEPENLRSTARKQLIIRNATHVELAFYWQIMKPNLQPLMPGETFSMDSIKCYPDKETAFSIMPRKGVLSPHTDHEFILSFSPHELRDFHSVLQMVLEEVPEPVSSEAESLGHSSYSVDDVIVLEIEVKGSVEPFQVLLEPYALIIPGENYIGINVKKAFKMWNNSKSPIRYLWGKISDCHIIEVEPGTGVIEPSEVGDFELNFTGGVPGPTSQDLLCEIEDSPSPVVLHIEAVFKGPALIINVSALQFGLLRLGQKATNSIQIRNVSQLPATWRMKESPVSLQERPEDVSPFDIEPSSGQLHSLGECRVDITLEALHCQHLETVLELEVENGAWSYLPVYAEVQKPHVYLQSSQVEVRNLYLGVPTKTTITLINGTLLPTQFHWGKLLGHQAEFCMVTVSPKHGLLGPSEECQLKLELTAHTQEELTHLALPCHVSGMKKPLVLGISGKPQGLQVAITISKESSDCSTEQWPGHPKELRLDFGSAVPLRTRVTRQLILTNRSPIRTRFSLKFEYFGSPQNSLSKKTSLPNMPPALLKTVRMQEHLAKREQLDFMESMLSHGKGAAFFPHFSQGMLGPYQQLCIDITGCANMWGEYWDNLICTVGDLLPEVIPVHMAAVGCPISSLRTTSYTIDQAQKEPAMRFGTQVSGGDTVTRTLRLNNSSPCDIRLDWETYVPEDKEDRLVELLVFYGPPFPLRDQAGNELVCPDTPEGGCLLWSPGPSSSSEFSHETDSSVEGSSSASNRVAQKLISVILQAHEGVPSGHLYCISPKQVVVPAGGSSTIYISFTPMVLSPEILHKVECTGYALGFMSLDSKVEREIPGKRHRLQDFAVGPLKLDLHSYVRPAQLSVELDYGGSMEFQCQASDLIPEQPCSGVLSELVTTHHLKLTNTTEIPHYFRLMVSRPFSVSQDGASQDHRAPGPGQKQECEEETASADKQLVLQAQENMLVNVSFSLSLELLSYQKLPADQTLPGVDIQQSASGEREMVFTQNLLLEYTNQTTQVVPLRAVVAVPELQLSTSWVDFGTCFVSQQRVREVYLMNLSGCRSYWTMLMGQQEPAKAAVAFRVSPNSGLLEARSANAPPTSIALQVFFTARSSELYESTMVVEGVLGEKSCTLRLRGQGSYDERYMLPHQP</sequence>
<proteinExistence type="evidence at protein level"/>
<keyword id="KW-0025">Alternative splicing</keyword>
<keyword id="KW-0963">Cytoplasm</keyword>
<keyword id="KW-0221">Differentiation</keyword>
<keyword id="KW-1267">Proteomics identification</keyword>
<keyword id="KW-1185">Reference proteome</keyword>
<keyword id="KW-0744">Spermatogenesis</keyword>
<keyword id="KW-0043">Tumor suppressor</keyword>
<accession>Q9Y238</accession>
<accession>Q9NSW0</accession>
<accession>Q9NTG5</accession>
<dbReference type="EMBL" id="AB026898">
    <property type="protein sequence ID" value="BAA77624.1"/>
    <property type="molecule type" value="Genomic_DNA"/>
</dbReference>
<dbReference type="EMBL" id="AB020522">
    <property type="protein sequence ID" value="BAA77247.1"/>
    <property type="molecule type" value="mRNA"/>
</dbReference>
<dbReference type="EMBL" id="AC144536">
    <property type="status" value="NOT_ANNOTATED_CDS"/>
    <property type="molecule type" value="Genomic_DNA"/>
</dbReference>
<dbReference type="EMBL" id="AP006309">
    <property type="status" value="NOT_ANNOTATED_CDS"/>
    <property type="molecule type" value="Genomic_DNA"/>
</dbReference>
<dbReference type="EMBL" id="AL137706">
    <property type="protein sequence ID" value="CAB70884.2"/>
    <property type="status" value="ALT_INIT"/>
    <property type="molecule type" value="Transcribed_RNA"/>
</dbReference>
<dbReference type="EMBL" id="AL137282">
    <property type="protein sequence ID" value="CAB70676.1"/>
    <property type="status" value="ALT_SEQ"/>
    <property type="molecule type" value="mRNA"/>
</dbReference>
<dbReference type="CCDS" id="CCDS2672.2">
    <molecule id="Q9Y238-1"/>
</dbReference>
<dbReference type="PIR" id="T46351">
    <property type="entry name" value="T46351"/>
</dbReference>
<dbReference type="PIR" id="T46406">
    <property type="entry name" value="T46406"/>
</dbReference>
<dbReference type="RefSeq" id="NP_001308082.1">
    <property type="nucleotide sequence ID" value="NM_001321153.1"/>
</dbReference>
<dbReference type="RefSeq" id="NP_031361.2">
    <molecule id="Q9Y238-1"/>
    <property type="nucleotide sequence ID" value="NM_007335.4"/>
</dbReference>
<dbReference type="RefSeq" id="NP_031363.2">
    <molecule id="Q9Y238-3"/>
    <property type="nucleotide sequence ID" value="NM_007337.4"/>
</dbReference>
<dbReference type="SMR" id="Q9Y238"/>
<dbReference type="BioGRID" id="115266">
    <property type="interactions" value="14"/>
</dbReference>
<dbReference type="FunCoup" id="Q9Y238">
    <property type="interactions" value="173"/>
</dbReference>
<dbReference type="IntAct" id="Q9Y238">
    <property type="interactions" value="3"/>
</dbReference>
<dbReference type="STRING" id="9606.ENSP00000308597"/>
<dbReference type="GlyGen" id="Q9Y238">
    <property type="glycosylation" value="1 site"/>
</dbReference>
<dbReference type="iPTMnet" id="Q9Y238"/>
<dbReference type="PhosphoSitePlus" id="Q9Y238"/>
<dbReference type="BioMuta" id="DLEC1"/>
<dbReference type="DMDM" id="296434480"/>
<dbReference type="jPOST" id="Q9Y238"/>
<dbReference type="MassIVE" id="Q9Y238"/>
<dbReference type="PaxDb" id="9606-ENSP00000308597"/>
<dbReference type="PeptideAtlas" id="Q9Y238"/>
<dbReference type="ProteomicsDB" id="85633">
    <molecule id="Q9Y238-1"/>
</dbReference>
<dbReference type="ProteomicsDB" id="85634">
    <molecule id="Q9Y238-2"/>
</dbReference>
<dbReference type="ProteomicsDB" id="85635">
    <molecule id="Q9Y238-3"/>
</dbReference>
<dbReference type="Antibodypedia" id="6364">
    <property type="antibodies" value="173 antibodies from 25 providers"/>
</dbReference>
<dbReference type="DNASU" id="9940"/>
<dbReference type="Ensembl" id="ENST00000308059.11">
    <molecule id="Q9Y238-1"/>
    <property type="protein sequence ID" value="ENSP00000308597.6"/>
    <property type="gene ID" value="ENSG00000008226.20"/>
</dbReference>
<dbReference type="Ensembl" id="ENST00000346219.7">
    <molecule id="Q9Y238-3"/>
    <property type="protein sequence ID" value="ENSP00000315914.5"/>
    <property type="gene ID" value="ENSG00000008226.20"/>
</dbReference>
<dbReference type="GeneID" id="9940"/>
<dbReference type="KEGG" id="hsa:9940"/>
<dbReference type="MANE-Select" id="ENST00000308059.11">
    <property type="protein sequence ID" value="ENSP00000308597.6"/>
    <property type="RefSeq nucleotide sequence ID" value="NM_007335.4"/>
    <property type="RefSeq protein sequence ID" value="NP_031361.2"/>
</dbReference>
<dbReference type="UCSC" id="uc003cho.2">
    <molecule id="Q9Y238-1"/>
    <property type="organism name" value="human"/>
</dbReference>
<dbReference type="AGR" id="HGNC:2899"/>
<dbReference type="CTD" id="9940"/>
<dbReference type="DisGeNET" id="9940"/>
<dbReference type="GeneCards" id="DLEC1"/>
<dbReference type="HGNC" id="HGNC:2899">
    <property type="gene designation" value="DLEC1"/>
</dbReference>
<dbReference type="HPA" id="ENSG00000008226">
    <property type="expression patterns" value="Tissue enhanced (choroid plexus, fallopian tube, testis)"/>
</dbReference>
<dbReference type="MalaCards" id="DLEC1"/>
<dbReference type="MIM" id="133239">
    <property type="type" value="phenotype"/>
</dbReference>
<dbReference type="MIM" id="211980">
    <property type="type" value="phenotype"/>
</dbReference>
<dbReference type="MIM" id="604050">
    <property type="type" value="gene"/>
</dbReference>
<dbReference type="neXtProt" id="NX_Q9Y238"/>
<dbReference type="OpenTargets" id="ENSG00000008226"/>
<dbReference type="Orphanet" id="99977">
    <property type="disease" value="Squamous cell carcinoma of the esophagus"/>
</dbReference>
<dbReference type="PharmGKB" id="PA27353"/>
<dbReference type="VEuPathDB" id="HostDB:ENSG00000008226"/>
<dbReference type="eggNOG" id="ENOG502QQQ5">
    <property type="taxonomic scope" value="Eukaryota"/>
</dbReference>
<dbReference type="GeneTree" id="ENSGT00390000006098"/>
<dbReference type="HOGENOM" id="CLU_003422_0_0_1"/>
<dbReference type="InParanoid" id="Q9Y238"/>
<dbReference type="OMA" id="LIKYTWE"/>
<dbReference type="OrthoDB" id="2115465at2759"/>
<dbReference type="PAN-GO" id="Q9Y238">
    <property type="GO annotations" value="3 GO annotations based on evolutionary models"/>
</dbReference>
<dbReference type="PhylomeDB" id="Q9Y238"/>
<dbReference type="TreeFam" id="TF340616"/>
<dbReference type="PathwayCommons" id="Q9Y238"/>
<dbReference type="SignaLink" id="Q9Y238"/>
<dbReference type="BioGRID-ORCS" id="9940">
    <property type="hits" value="11 hits in 1140 CRISPR screens"/>
</dbReference>
<dbReference type="ChiTaRS" id="DLEC1">
    <property type="organism name" value="human"/>
</dbReference>
<dbReference type="GenomeRNAi" id="9940"/>
<dbReference type="Pharos" id="Q9Y238">
    <property type="development level" value="Tbio"/>
</dbReference>
<dbReference type="PRO" id="PR:Q9Y238"/>
<dbReference type="Proteomes" id="UP000005640">
    <property type="component" value="Chromosome 3"/>
</dbReference>
<dbReference type="RNAct" id="Q9Y238">
    <property type="molecule type" value="protein"/>
</dbReference>
<dbReference type="Bgee" id="ENSG00000008226">
    <property type="expression patterns" value="Expressed in right uterine tube and 144 other cell types or tissues"/>
</dbReference>
<dbReference type="ExpressionAtlas" id="Q9Y238">
    <property type="expression patterns" value="baseline and differential"/>
</dbReference>
<dbReference type="GO" id="GO:0005929">
    <property type="term" value="C:cilium"/>
    <property type="evidence" value="ECO:0000318"/>
    <property type="project" value="GO_Central"/>
</dbReference>
<dbReference type="GO" id="GO:0005737">
    <property type="term" value="C:cytoplasm"/>
    <property type="evidence" value="ECO:0000314"/>
    <property type="project" value="UniProtKB"/>
</dbReference>
<dbReference type="GO" id="GO:0005829">
    <property type="term" value="C:cytosol"/>
    <property type="evidence" value="ECO:0000314"/>
    <property type="project" value="HPA"/>
</dbReference>
<dbReference type="GO" id="GO:0043014">
    <property type="term" value="F:alpha-tubulin binding"/>
    <property type="evidence" value="ECO:0000314"/>
    <property type="project" value="UniProtKB"/>
</dbReference>
<dbReference type="GO" id="GO:0048487">
    <property type="term" value="F:beta-tubulin binding"/>
    <property type="evidence" value="ECO:0000314"/>
    <property type="project" value="UniProtKB"/>
</dbReference>
<dbReference type="GO" id="GO:0015631">
    <property type="term" value="F:tubulin binding"/>
    <property type="evidence" value="ECO:0000318"/>
    <property type="project" value="GO_Central"/>
</dbReference>
<dbReference type="GO" id="GO:0030154">
    <property type="term" value="P:cell differentiation"/>
    <property type="evidence" value="ECO:0007669"/>
    <property type="project" value="UniProtKB-KW"/>
</dbReference>
<dbReference type="GO" id="GO:0002357">
    <property type="term" value="P:defense response to tumor cell"/>
    <property type="evidence" value="ECO:0000315"/>
    <property type="project" value="ARUK-UCL"/>
</dbReference>
<dbReference type="GO" id="GO:0008285">
    <property type="term" value="P:negative regulation of cell population proliferation"/>
    <property type="evidence" value="ECO:0000304"/>
    <property type="project" value="ProtInc"/>
</dbReference>
<dbReference type="GO" id="GO:0007283">
    <property type="term" value="P:spermatogenesis"/>
    <property type="evidence" value="ECO:0000250"/>
    <property type="project" value="UniProtKB"/>
</dbReference>
<dbReference type="FunFam" id="2.60.40.10:FF:002933">
    <property type="entry name" value="Deleted in lung and esophageal cancer protein 1"/>
    <property type="match status" value="1"/>
</dbReference>
<dbReference type="FunFam" id="2.60.40.10:FF:002936">
    <property type="entry name" value="DLEC1, cilia and flagella associated protein"/>
    <property type="match status" value="1"/>
</dbReference>
<dbReference type="Gene3D" id="2.60.40.10">
    <property type="entry name" value="Immunoglobulins"/>
    <property type="match status" value="7"/>
</dbReference>
<dbReference type="InterPro" id="IPR033304">
    <property type="entry name" value="DLEC1"/>
</dbReference>
<dbReference type="InterPro" id="IPR013783">
    <property type="entry name" value="Ig-like_fold"/>
</dbReference>
<dbReference type="PANTHER" id="PTHR46348">
    <property type="entry name" value="DELETED IN LUNG AND ESOPHAGEAL CANCER PROTEIN 1"/>
    <property type="match status" value="1"/>
</dbReference>
<dbReference type="PANTHER" id="PTHR46348:SF1">
    <property type="entry name" value="DELETED IN LUNG AND ESOPHAGEAL CANCER PROTEIN 1"/>
    <property type="match status" value="1"/>
</dbReference>
<dbReference type="Pfam" id="PF23277">
    <property type="entry name" value="Ig_Dlec1_1"/>
    <property type="match status" value="1"/>
</dbReference>
<dbReference type="Pfam" id="PF23316">
    <property type="entry name" value="Ig_DLEC1_6th"/>
    <property type="match status" value="1"/>
</dbReference>
<gene>
    <name evidence="9" type="primary">DLEC1</name>
    <name evidence="6" type="synonym">DLC1</name>
</gene>
<organism>
    <name type="scientific">Homo sapiens</name>
    <name type="common">Human</name>
    <dbReference type="NCBI Taxonomy" id="9606"/>
    <lineage>
        <taxon>Eukaryota</taxon>
        <taxon>Metazoa</taxon>
        <taxon>Chordata</taxon>
        <taxon>Craniata</taxon>
        <taxon>Vertebrata</taxon>
        <taxon>Euteleostomi</taxon>
        <taxon>Mammalia</taxon>
        <taxon>Eutheria</taxon>
        <taxon>Euarchontoglires</taxon>
        <taxon>Primates</taxon>
        <taxon>Haplorrhini</taxon>
        <taxon>Catarrhini</taxon>
        <taxon>Hominidae</taxon>
        <taxon>Homo</taxon>
    </lineage>
</organism>
<name>DLEC1_HUMAN</name>
<protein>
    <recommendedName>
        <fullName>Deleted in lung and esophageal cancer protein 1</fullName>
    </recommendedName>
    <alternativeName>
        <fullName>Deleted in lung cancer protein 1</fullName>
        <shortName>DLC-1</shortName>
    </alternativeName>
</protein>
<reference evidence="8 9" key="1">
    <citation type="journal article" date="1999" name="Cancer Res.">
        <title>Molecular cloning of a candidate tumor suppressor gene, DLC1, from chromosome 3p21.3.</title>
        <authorList>
            <person name="Daigo Y."/>
            <person name="Nishiwaki T."/>
            <person name="Kawasoe T."/>
            <person name="Tamari M."/>
            <person name="Tsuchiya E."/>
            <person name="Nakamura Y."/>
        </authorList>
    </citation>
    <scope>NUCLEOTIDE SEQUENCE [GENOMIC DNA / MRNA] (ISOFORM 1)</scope>
    <scope>ALTERNATIVE SPLICING</scope>
    <scope>PUTATIVE FUNCTION</scope>
    <scope>SUBCELLULAR LOCATION</scope>
    <scope>TISSUE SPECIFICITY</scope>
    <scope>INVOLVEMENT IN LUNG CANCER; ESOPHAGEAL CANCER AND RENAL CANCER</scope>
</reference>
<reference key="2">
    <citation type="journal article" date="2006" name="Nature">
        <title>The DNA sequence, annotation and analysis of human chromosome 3.</title>
        <authorList>
            <person name="Muzny D.M."/>
            <person name="Scherer S.E."/>
            <person name="Kaul R."/>
            <person name="Wang J."/>
            <person name="Yu J."/>
            <person name="Sudbrak R."/>
            <person name="Buhay C.J."/>
            <person name="Chen R."/>
            <person name="Cree A."/>
            <person name="Ding Y."/>
            <person name="Dugan-Rocha S."/>
            <person name="Gill R."/>
            <person name="Gunaratne P."/>
            <person name="Harris R.A."/>
            <person name="Hawes A.C."/>
            <person name="Hernandez J."/>
            <person name="Hodgson A.V."/>
            <person name="Hume J."/>
            <person name="Jackson A."/>
            <person name="Khan Z.M."/>
            <person name="Kovar-Smith C."/>
            <person name="Lewis L.R."/>
            <person name="Lozado R.J."/>
            <person name="Metzker M.L."/>
            <person name="Milosavljevic A."/>
            <person name="Miner G.R."/>
            <person name="Morgan M.B."/>
            <person name="Nazareth L.V."/>
            <person name="Scott G."/>
            <person name="Sodergren E."/>
            <person name="Song X.-Z."/>
            <person name="Steffen D."/>
            <person name="Wei S."/>
            <person name="Wheeler D.A."/>
            <person name="Wright M.W."/>
            <person name="Worley K.C."/>
            <person name="Yuan Y."/>
            <person name="Zhang Z."/>
            <person name="Adams C.Q."/>
            <person name="Ansari-Lari M.A."/>
            <person name="Ayele M."/>
            <person name="Brown M.J."/>
            <person name="Chen G."/>
            <person name="Chen Z."/>
            <person name="Clendenning J."/>
            <person name="Clerc-Blankenburg K.P."/>
            <person name="Chen R."/>
            <person name="Chen Z."/>
            <person name="Davis C."/>
            <person name="Delgado O."/>
            <person name="Dinh H.H."/>
            <person name="Dong W."/>
            <person name="Draper H."/>
            <person name="Ernst S."/>
            <person name="Fu G."/>
            <person name="Gonzalez-Garay M.L."/>
            <person name="Garcia D.K."/>
            <person name="Gillett W."/>
            <person name="Gu J."/>
            <person name="Hao B."/>
            <person name="Haugen E."/>
            <person name="Havlak P."/>
            <person name="He X."/>
            <person name="Hennig S."/>
            <person name="Hu S."/>
            <person name="Huang W."/>
            <person name="Jackson L.R."/>
            <person name="Jacob L.S."/>
            <person name="Kelly S.H."/>
            <person name="Kube M."/>
            <person name="Levy R."/>
            <person name="Li Z."/>
            <person name="Liu B."/>
            <person name="Liu J."/>
            <person name="Liu W."/>
            <person name="Lu J."/>
            <person name="Maheshwari M."/>
            <person name="Nguyen B.-V."/>
            <person name="Okwuonu G.O."/>
            <person name="Palmeiri A."/>
            <person name="Pasternak S."/>
            <person name="Perez L.M."/>
            <person name="Phelps K.A."/>
            <person name="Plopper F.J."/>
            <person name="Qiang B."/>
            <person name="Raymond C."/>
            <person name="Rodriguez R."/>
            <person name="Saenphimmachak C."/>
            <person name="Santibanez J."/>
            <person name="Shen H."/>
            <person name="Shen Y."/>
            <person name="Subramanian S."/>
            <person name="Tabor P.E."/>
            <person name="Verduzco D."/>
            <person name="Waldron L."/>
            <person name="Wang J."/>
            <person name="Wang J."/>
            <person name="Wang Q."/>
            <person name="Williams G.A."/>
            <person name="Wong G.K.-S."/>
            <person name="Yao Z."/>
            <person name="Zhang J."/>
            <person name="Zhang X."/>
            <person name="Zhao G."/>
            <person name="Zhou J."/>
            <person name="Zhou Y."/>
            <person name="Nelson D."/>
            <person name="Lehrach H."/>
            <person name="Reinhardt R."/>
            <person name="Naylor S.L."/>
            <person name="Yang H."/>
            <person name="Olson M."/>
            <person name="Weinstock G."/>
            <person name="Gibbs R.A."/>
        </authorList>
    </citation>
    <scope>NUCLEOTIDE SEQUENCE [LARGE SCALE GENOMIC DNA]</scope>
</reference>
<reference key="3">
    <citation type="journal article" date="2007" name="BMC Genomics">
        <title>The full-ORF clone resource of the German cDNA consortium.</title>
        <authorList>
            <person name="Bechtel S."/>
            <person name="Rosenfelder H."/>
            <person name="Duda A."/>
            <person name="Schmidt C.P."/>
            <person name="Ernst U."/>
            <person name="Wellenreuther R."/>
            <person name="Mehrle A."/>
            <person name="Schuster C."/>
            <person name="Bahr A."/>
            <person name="Bloecker H."/>
            <person name="Heubner D."/>
            <person name="Hoerlein A."/>
            <person name="Michel G."/>
            <person name="Wedler H."/>
            <person name="Koehrer K."/>
            <person name="Ottenwaelder B."/>
            <person name="Poustka A."/>
            <person name="Wiemann S."/>
            <person name="Schupp I."/>
        </authorList>
    </citation>
    <scope>NUCLEOTIDE SEQUENCE [LARGE SCALE MRNA] OF 595-1755 (ISOFORM 2)</scope>
    <scope>NUCLEOTIDE SEQUENCE [LARGE SCALE MRNA] OF 1417-1755 (ISOFORM 3)</scope>
    <source>
        <tissue>Testis</tissue>
    </source>
</reference>
<reference key="4">
    <citation type="journal article" date="2006" name="Science">
        <title>The consensus coding sequences of human breast and colorectal cancers.</title>
        <authorList>
            <person name="Sjoeblom T."/>
            <person name="Jones S."/>
            <person name="Wood L.D."/>
            <person name="Parsons D.W."/>
            <person name="Lin J."/>
            <person name="Barber T.D."/>
            <person name="Mandelker D."/>
            <person name="Leary R.J."/>
            <person name="Ptak J."/>
            <person name="Silliman N."/>
            <person name="Szabo S."/>
            <person name="Buckhaults P."/>
            <person name="Farrell C."/>
            <person name="Meeh P."/>
            <person name="Markowitz S.D."/>
            <person name="Willis J."/>
            <person name="Dawson D."/>
            <person name="Willson J.K.V."/>
            <person name="Gazdar A.F."/>
            <person name="Hartigan J."/>
            <person name="Wu L."/>
            <person name="Liu C."/>
            <person name="Parmigiani G."/>
            <person name="Park B.H."/>
            <person name="Bachman K.E."/>
            <person name="Papadopoulos N."/>
            <person name="Vogelstein B."/>
            <person name="Kinzler K.W."/>
            <person name="Velculescu V.E."/>
        </authorList>
    </citation>
    <scope>VARIANT [LARGE SCALE ANALYSIS] ARG-351</scope>
</reference>
<reference key="5">
    <citation type="journal article" date="2020" name="Sci. Rep.">
        <title>Dlec1 is required for spermatogenesis and male fertility in mice.</title>
        <authorList>
            <person name="Okitsu Y."/>
            <person name="Nagano M."/>
            <person name="Yamagata T."/>
            <person name="Ito C."/>
            <person name="Toshimori K."/>
            <person name="Dohra H."/>
            <person name="Fujii W."/>
            <person name="Yogo K."/>
        </authorList>
    </citation>
    <scope>SUBCELLULAR LOCATION</scope>
    <scope>INTERACTION WITH ALPHA-TUBULIN; BETA-TUBULIN; BBS2; BBS4; BBS5; MKKS; TCP1; CCT2; CCT3; CCT4; CCT5 AND CCT7</scope>
</reference>
<comment type="function">
    <text evidence="1 3">Essential for spermatogenesis and male fertility (By similarity). May play an important role in sperm head and tail formation (By similarity). May act as a tumor suppressor by inhibiting cell proliferation.</text>
</comment>
<comment type="subunit">
    <text evidence="5">Interacts with alpha- and beta-tubulin (PubMed:33144677). Interacts with BBS2, BBS4, BBS5, MKKS, TCP1, CCT2, CCT3, CCT4, CCT5 and CCT7 (PubMed:33144677).</text>
</comment>
<comment type="subcellular location">
    <subcellularLocation>
        <location evidence="3 5">Cytoplasm</location>
    </subcellularLocation>
</comment>
<comment type="alternative products">
    <event type="alternative splicing"/>
    <isoform>
        <id>Q9Y238-1</id>
        <name evidence="6">1</name>
        <sequence type="displayed"/>
    </isoform>
    <isoform>
        <id>Q9Y238-2</id>
        <name>2</name>
        <sequence type="described" ref="VSP_051847 VSP_051848 VSP_051849"/>
    </isoform>
    <isoform>
        <id>Q9Y238-3</id>
        <name>3</name>
        <name evidence="6">1S3</name>
        <sequence type="described" ref="VSP_051850"/>
    </isoform>
    <text evidence="6">At least six differentially spliced products may exist.</text>
</comment>
<comment type="tissue specificity">
    <text evidence="3">Expressed in all tissues examined. Expression is highest in prostate and testis.</text>
</comment>
<comment type="disease">
    <text>DLEC1 silencing due to promoter methylation and aberrant transcription are implicated in the development of different cancers, including esophageal (ESCR), renal and lung cancers (LNCR).</text>
</comment>
<comment type="disease">
    <disease id="DI-02205">
        <name>Lung cancer</name>
        <acronym>LNCR</acronym>
        <description>A common malignancy affecting tissues of the lung. The most common form of lung cancer is non-small cell lung cancer (NSCLC) that can be divided into 3 major histologic subtypes: squamous cell carcinoma, adenocarcinoma, and large cell lung cancer. NSCLC is often diagnosed at an advanced stage and has a poor prognosis.</description>
        <dbReference type="MIM" id="211980"/>
    </disease>
    <text>The gene represented in this entry may be involved in disease pathogenesis. DLEC1 silencing due to promoter methylation and aberrant transcription are implicated in the development of lung cancer.</text>
</comment>
<comment type="disease" evidence="3">
    <disease id="DI-01537">
        <name>Esophageal cancer</name>
        <acronym>ESCR</acronym>
        <description>A malignancy of the esophagus. The most common types are esophageal squamous cell carcinoma and adenocarcinoma. Cancer of the esophagus remains a devastating disease because it is usually not detected until it has progressed to an advanced incurable stage.</description>
        <dbReference type="MIM" id="133239"/>
    </disease>
    <text>The gene represented in this entry may be involved in disease pathogenesis. DLEC1 silencing due to promoter methylation and aberrant transcription may be implicated in the development of esophageal cancer.</text>
</comment>
<comment type="miscellaneous">
    <molecule>Isoform 2</molecule>
    <text evidence="6 8">Levels of this splice isoform may be increased in cancer cell lines and primary cancers.</text>
</comment>
<comment type="miscellaneous">
    <molecule>Isoform 3</molecule>
    <text evidence="3">Levels of this splice isoform are increased in cancer cell lines and primary cancers.</text>
</comment>
<comment type="sequence caution" evidence="8">
    <conflict type="miscellaneous discrepancy">
        <sequence resource="EMBL-CDS" id="CAB70676"/>
    </conflict>
    <text>Intron retention.</text>
</comment>
<comment type="sequence caution" evidence="8">
    <conflict type="erroneous initiation">
        <sequence resource="EMBL-CDS" id="CAB70884"/>
    </conflict>
    <text>Truncated N-terminus.</text>
</comment>
<feature type="chain" id="PRO_0000079929" description="Deleted in lung and esophageal cancer protein 1">
    <location>
        <begin position="1"/>
        <end position="1755"/>
    </location>
</feature>
<feature type="region of interest" description="Disordered" evidence="2">
    <location>
        <begin position="1"/>
        <end position="39"/>
    </location>
</feature>
<feature type="region of interest" description="Disordered" evidence="2">
    <location>
        <begin position="1339"/>
        <end position="1360"/>
    </location>
</feature>
<feature type="region of interest" description="Disordered" evidence="2">
    <location>
        <begin position="1529"/>
        <end position="1553"/>
    </location>
</feature>
<feature type="compositionally biased region" description="Basic residues" evidence="2">
    <location>
        <begin position="1"/>
        <end position="12"/>
    </location>
</feature>
<feature type="compositionally biased region" description="Low complexity" evidence="2">
    <location>
        <begin position="30"/>
        <end position="39"/>
    </location>
</feature>
<feature type="splice variant" id="VSP_051847" description="In isoform 2." evidence="7">
    <original>E</original>
    <variation>MARLRGGRIPAMPQPSPGQPAGTQWCFQGTVFALQ</variation>
    <location>
        <position position="704"/>
    </location>
</feature>
<feature type="splice variant" id="VSP_051848" description="In isoform 2." evidence="7">
    <original>GPALIINVSALQFGLLRLGQKATNSIQIRN</original>
    <variation>PFSLVCSAWGRKPQTPSRSGTSASSQPHGA</variation>
    <location>
        <begin position="856"/>
        <end position="885"/>
    </location>
</feature>
<feature type="splice variant" id="VSP_051849" description="In isoform 2." evidence="7">
    <location>
        <begin position="886"/>
        <end position="1755"/>
    </location>
</feature>
<feature type="splice variant" id="VSP_051850" description="In isoform 3." evidence="7">
    <original>QQEPAKAAVAFRVSPNSGLLEARSANAPPTSIALQVFFTARSSELYESTMVVEGVLGEKSCTLRLRGQGSYDERYMLPHQP</original>
    <variation>VVSCTSPRWWWKVCSVRSPAPCGSGAKAPMMRDTCCLTSPEAPPQPSAPGPSWRKNIAQGLGAALQHKDTDLGTWGPLGSSWNGRTPFHNGLSLGPHDMSSELT</variation>
    <location>
        <begin position="1675"/>
        <end position="1755"/>
    </location>
</feature>
<feature type="sequence variant" id="VAR_056860" description="In dbSNP:rs7625806.">
    <original>L</original>
    <variation>R</variation>
    <location>
        <position position="79"/>
    </location>
</feature>
<feature type="sequence variant" id="VAR_056861" description="In dbSNP:rs34012183.">
    <original>S</original>
    <variation>F</variation>
    <location>
        <position position="192"/>
    </location>
</feature>
<feature type="sequence variant" id="VAR_035908" description="In a breast cancer sample; somatic mutation." evidence="4">
    <original>P</original>
    <variation>R</variation>
    <location>
        <position position="351"/>
    </location>
</feature>
<feature type="sequence variant" id="VAR_056862" description="In dbSNP:rs36012922.">
    <original>K</original>
    <variation>N</variation>
    <location>
        <position position="1022"/>
    </location>
</feature>
<feature type="sequence variant" id="VAR_056863" description="In dbSNP:rs9840172.">
    <original>N</original>
    <variation>D</variation>
    <location>
        <position position="1150"/>
    </location>
</feature>
<feature type="sequence variant" id="VAR_056864" description="In dbSNP:rs9810085.">
    <original>L</original>
    <variation>P</variation>
    <location>
        <position position="1227"/>
    </location>
</feature>
<feature type="sequence conflict" description="In Ref. 2; CAB70884." evidence="8" ref="2">
    <original>E</original>
    <variation>M</variation>
    <location>
        <position position="704"/>
    </location>
</feature>
<feature type="sequence conflict" description="In Ref. 1; BAA77624/BAA77247." evidence="8" ref="1">
    <original>G</original>
    <variation>R</variation>
    <location>
        <position position="1442"/>
    </location>
</feature>